<reference evidence="4" key="1">
    <citation type="journal article" date="2009" name="BMC Evol. Biol.">
        <title>A proteomic approach for studying insect phylogeny: CAPA peptides of ancient insect taxa (Dictyoptera, Blattoptera) as a test case.</title>
        <authorList>
            <person name="Roth S."/>
            <person name="Fromm B."/>
            <person name="Gaede G."/>
            <person name="Predel R."/>
        </authorList>
    </citation>
    <scope>PROTEIN SEQUENCE</scope>
    <scope>AMIDATION AT VAL-11</scope>
    <source>
        <tissue evidence="2">Abdominal perisympathetic organs</tissue>
    </source>
</reference>
<protein>
    <recommendedName>
        <fullName evidence="3">Periviscerokinin-2</fullName>
        <shortName evidence="3">AptFu-PVK-2</shortName>
    </recommendedName>
</protein>
<comment type="function">
    <text evidence="4">Mediates visceral muscle contractile activity (myotropic activity).</text>
</comment>
<comment type="subcellular location">
    <subcellularLocation>
        <location evidence="4">Secreted</location>
    </subcellularLocation>
</comment>
<comment type="similarity">
    <text evidence="1">Belongs to the periviscerokinin family.</text>
</comment>
<proteinExistence type="evidence at protein level"/>
<keyword id="KW-0027">Amidation</keyword>
<keyword id="KW-0903">Direct protein sequencing</keyword>
<keyword id="KW-0527">Neuropeptide</keyword>
<keyword id="KW-0964">Secreted</keyword>
<organism>
    <name type="scientific">Aptera fusca</name>
    <name type="common">Cape Mountain cockroach</name>
    <name type="synonym">Giant Table Mountain cockroach</name>
    <dbReference type="NCBI Taxonomy" id="344696"/>
    <lineage>
        <taxon>Eukaryota</taxon>
        <taxon>Metazoa</taxon>
        <taxon>Ecdysozoa</taxon>
        <taxon>Arthropoda</taxon>
        <taxon>Hexapoda</taxon>
        <taxon>Insecta</taxon>
        <taxon>Pterygota</taxon>
        <taxon>Neoptera</taxon>
        <taxon>Polyneoptera</taxon>
        <taxon>Dictyoptera</taxon>
        <taxon>Blattodea</taxon>
        <taxon>Blaberoidea</taxon>
        <taxon>Blaberidae</taxon>
        <taxon>Epilamprinae</taxon>
        <taxon>Aptera</taxon>
    </lineage>
</organism>
<feature type="peptide" id="PRO_0000378773" description="Periviscerokinin-2" evidence="2">
    <location>
        <begin position="1"/>
        <end position="11"/>
    </location>
</feature>
<feature type="modified residue" description="Valine amide" evidence="2">
    <location>
        <position position="11"/>
    </location>
</feature>
<dbReference type="GO" id="GO:0005576">
    <property type="term" value="C:extracellular region"/>
    <property type="evidence" value="ECO:0007669"/>
    <property type="project" value="UniProtKB-SubCell"/>
</dbReference>
<dbReference type="GO" id="GO:0007218">
    <property type="term" value="P:neuropeptide signaling pathway"/>
    <property type="evidence" value="ECO:0007669"/>
    <property type="project" value="UniProtKB-KW"/>
</dbReference>
<dbReference type="InterPro" id="IPR013231">
    <property type="entry name" value="Periviscerokinin"/>
</dbReference>
<dbReference type="Pfam" id="PF08259">
    <property type="entry name" value="Periviscerokin"/>
    <property type="match status" value="1"/>
</dbReference>
<sequence length="11" mass="1103">GSSGLISMPRV</sequence>
<name>PVK2_APTFU</name>
<evidence type="ECO:0000255" key="1"/>
<evidence type="ECO:0000269" key="2">
    <source>
    </source>
</evidence>
<evidence type="ECO:0000303" key="3">
    <source>
    </source>
</evidence>
<evidence type="ECO:0000305" key="4"/>
<accession>P85532</accession>